<evidence type="ECO:0000250" key="1"/>
<evidence type="ECO:0000255" key="2"/>
<evidence type="ECO:0000305" key="3"/>
<protein>
    <recommendedName>
        <fullName>Probable cytosol aminopeptidase</fullName>
        <ecNumber>3.4.11.1</ecNumber>
    </recommendedName>
    <alternativeName>
        <fullName>Leucine aminopeptidase</fullName>
        <shortName>LAP</shortName>
        <ecNumber>3.4.11.10</ecNumber>
    </alternativeName>
    <alternativeName>
        <fullName>Leucyl aminopeptidase</fullName>
    </alternativeName>
</protein>
<feature type="chain" id="PRO_0000165771" description="Probable cytosol aminopeptidase">
    <location>
        <begin position="1"/>
        <end position="515"/>
    </location>
</feature>
<feature type="active site" evidence="2">
    <location>
        <position position="291"/>
    </location>
</feature>
<feature type="active site" evidence="2">
    <location>
        <position position="365"/>
    </location>
</feature>
<feature type="binding site" evidence="1">
    <location>
        <position position="279"/>
    </location>
    <ligand>
        <name>Mn(2+)</name>
        <dbReference type="ChEBI" id="CHEBI:29035"/>
        <label>2</label>
    </ligand>
</feature>
<feature type="binding site" evidence="1">
    <location>
        <position position="284"/>
    </location>
    <ligand>
        <name>Mn(2+)</name>
        <dbReference type="ChEBI" id="CHEBI:29035"/>
        <label>1</label>
    </ligand>
</feature>
<feature type="binding site" evidence="1">
    <location>
        <position position="284"/>
    </location>
    <ligand>
        <name>Mn(2+)</name>
        <dbReference type="ChEBI" id="CHEBI:29035"/>
        <label>2</label>
    </ligand>
</feature>
<feature type="binding site" evidence="1">
    <location>
        <position position="302"/>
    </location>
    <ligand>
        <name>Mn(2+)</name>
        <dbReference type="ChEBI" id="CHEBI:29035"/>
        <label>2</label>
    </ligand>
</feature>
<feature type="binding site" evidence="1">
    <location>
        <position position="361"/>
    </location>
    <ligand>
        <name>Mn(2+)</name>
        <dbReference type="ChEBI" id="CHEBI:29035"/>
        <label>1</label>
    </ligand>
</feature>
<feature type="binding site" evidence="1">
    <location>
        <position position="363"/>
    </location>
    <ligand>
        <name>Mn(2+)</name>
        <dbReference type="ChEBI" id="CHEBI:29035"/>
        <label>1</label>
    </ligand>
</feature>
<feature type="binding site" evidence="1">
    <location>
        <position position="363"/>
    </location>
    <ligand>
        <name>Mn(2+)</name>
        <dbReference type="ChEBI" id="CHEBI:29035"/>
        <label>2</label>
    </ligand>
</feature>
<comment type="function">
    <text evidence="1">Presumably involved in the processing and regular turnover of intracellular proteins. Catalyzes the removal of unsubstituted N-terminal amino acids from various peptides (By similarity).</text>
</comment>
<comment type="catalytic activity">
    <reaction>
        <text>Release of an N-terminal amino acid, Xaa-|-Yaa-, in which Xaa is preferably Leu, but may be other amino acids including Pro although not Arg or Lys, and Yaa may be Pro. Amino acid amides and methyl esters are also readily hydrolyzed, but rates on arylamides are exceedingly low.</text>
        <dbReference type="EC" id="3.4.11.1"/>
    </reaction>
</comment>
<comment type="catalytic activity">
    <reaction>
        <text>Release of an N-terminal amino acid, preferentially leucine, but not glutamic or aspartic acids.</text>
        <dbReference type="EC" id="3.4.11.10"/>
    </reaction>
</comment>
<comment type="cofactor">
    <cofactor evidence="1">
        <name>Mn(2+)</name>
        <dbReference type="ChEBI" id="CHEBI:29035"/>
    </cofactor>
    <text evidence="1">Binds 2 manganese ions per subunit.</text>
</comment>
<comment type="subcellular location">
    <subcellularLocation>
        <location evidence="1">Cytoplasm</location>
    </subcellularLocation>
</comment>
<comment type="similarity">
    <text evidence="3">Belongs to the peptidase M17 family.</text>
</comment>
<organism>
    <name type="scientific">Mycobacterium tuberculosis (strain ATCC 25618 / H37Rv)</name>
    <dbReference type="NCBI Taxonomy" id="83332"/>
    <lineage>
        <taxon>Bacteria</taxon>
        <taxon>Bacillati</taxon>
        <taxon>Actinomycetota</taxon>
        <taxon>Actinomycetes</taxon>
        <taxon>Mycobacteriales</taxon>
        <taxon>Mycobacteriaceae</taxon>
        <taxon>Mycobacterium</taxon>
        <taxon>Mycobacterium tuberculosis complex</taxon>
    </lineage>
</organism>
<name>AMPA_MYCTU</name>
<dbReference type="EC" id="3.4.11.1"/>
<dbReference type="EC" id="3.4.11.10"/>
<dbReference type="EMBL" id="AL123456">
    <property type="protein sequence ID" value="CCP44990.1"/>
    <property type="molecule type" value="Genomic_DNA"/>
</dbReference>
<dbReference type="PIR" id="F70786">
    <property type="entry name" value="F70786"/>
</dbReference>
<dbReference type="RefSeq" id="NP_216729.1">
    <property type="nucleotide sequence ID" value="NC_000962.3"/>
</dbReference>
<dbReference type="RefSeq" id="WP_003899220.1">
    <property type="nucleotide sequence ID" value="NZ_NVQJ01000008.1"/>
</dbReference>
<dbReference type="SMR" id="P9WHT3"/>
<dbReference type="FunCoup" id="P9WHT3">
    <property type="interactions" value="391"/>
</dbReference>
<dbReference type="STRING" id="83332.Rv2213"/>
<dbReference type="PaxDb" id="83332-Rv2213"/>
<dbReference type="DNASU" id="888105"/>
<dbReference type="GeneID" id="888105"/>
<dbReference type="KEGG" id="mtu:Rv2213"/>
<dbReference type="KEGG" id="mtv:RVBD_2213"/>
<dbReference type="TubercuList" id="Rv2213"/>
<dbReference type="eggNOG" id="COG0260">
    <property type="taxonomic scope" value="Bacteria"/>
</dbReference>
<dbReference type="InParanoid" id="P9WHT3"/>
<dbReference type="OrthoDB" id="9809354at2"/>
<dbReference type="PhylomeDB" id="P9WHT3"/>
<dbReference type="BRENDA" id="3.4.11.10">
    <property type="organism ID" value="3445"/>
</dbReference>
<dbReference type="Proteomes" id="UP000001584">
    <property type="component" value="Chromosome"/>
</dbReference>
<dbReference type="GO" id="GO:0005737">
    <property type="term" value="C:cytoplasm"/>
    <property type="evidence" value="ECO:0000318"/>
    <property type="project" value="GO_Central"/>
</dbReference>
<dbReference type="GO" id="GO:0009274">
    <property type="term" value="C:peptidoglycan-based cell wall"/>
    <property type="evidence" value="ECO:0007005"/>
    <property type="project" value="MTBBASE"/>
</dbReference>
<dbReference type="GO" id="GO:0005886">
    <property type="term" value="C:plasma membrane"/>
    <property type="evidence" value="ECO:0007005"/>
    <property type="project" value="MTBBASE"/>
</dbReference>
<dbReference type="GO" id="GO:0030145">
    <property type="term" value="F:manganese ion binding"/>
    <property type="evidence" value="ECO:0007669"/>
    <property type="project" value="UniProtKB-UniRule"/>
</dbReference>
<dbReference type="GO" id="GO:0070006">
    <property type="term" value="F:metalloaminopeptidase activity"/>
    <property type="evidence" value="ECO:0007669"/>
    <property type="project" value="InterPro"/>
</dbReference>
<dbReference type="GO" id="GO:0008233">
    <property type="term" value="F:peptidase activity"/>
    <property type="evidence" value="ECO:0000318"/>
    <property type="project" value="GO_Central"/>
</dbReference>
<dbReference type="GO" id="GO:0006508">
    <property type="term" value="P:proteolysis"/>
    <property type="evidence" value="ECO:0000318"/>
    <property type="project" value="GO_Central"/>
</dbReference>
<dbReference type="CDD" id="cd00433">
    <property type="entry name" value="Peptidase_M17"/>
    <property type="match status" value="1"/>
</dbReference>
<dbReference type="FunFam" id="3.40.630.10:FF:000087">
    <property type="entry name" value="Probable cytosol aminopeptidase"/>
    <property type="match status" value="1"/>
</dbReference>
<dbReference type="Gene3D" id="3.40.220.10">
    <property type="entry name" value="Leucine Aminopeptidase, subunit E, domain 1"/>
    <property type="match status" value="1"/>
</dbReference>
<dbReference type="Gene3D" id="3.40.630.10">
    <property type="entry name" value="Zn peptidases"/>
    <property type="match status" value="1"/>
</dbReference>
<dbReference type="HAMAP" id="MF_00181">
    <property type="entry name" value="Cytosol_peptidase_M17"/>
    <property type="match status" value="1"/>
</dbReference>
<dbReference type="InterPro" id="IPR011356">
    <property type="entry name" value="Leucine_aapep/pepB"/>
</dbReference>
<dbReference type="InterPro" id="IPR043472">
    <property type="entry name" value="Macro_dom-like"/>
</dbReference>
<dbReference type="InterPro" id="IPR000819">
    <property type="entry name" value="Peptidase_M17_C"/>
</dbReference>
<dbReference type="InterPro" id="IPR023042">
    <property type="entry name" value="Peptidase_M17_leu_NH2_pept"/>
</dbReference>
<dbReference type="InterPro" id="IPR008283">
    <property type="entry name" value="Peptidase_M17_N"/>
</dbReference>
<dbReference type="NCBIfam" id="NF002073">
    <property type="entry name" value="PRK00913.1-2"/>
    <property type="match status" value="1"/>
</dbReference>
<dbReference type="PANTHER" id="PTHR11963:SF23">
    <property type="entry name" value="CYTOSOL AMINOPEPTIDASE"/>
    <property type="match status" value="1"/>
</dbReference>
<dbReference type="PANTHER" id="PTHR11963">
    <property type="entry name" value="LEUCINE AMINOPEPTIDASE-RELATED"/>
    <property type="match status" value="1"/>
</dbReference>
<dbReference type="Pfam" id="PF00883">
    <property type="entry name" value="Peptidase_M17"/>
    <property type="match status" value="1"/>
</dbReference>
<dbReference type="Pfam" id="PF02789">
    <property type="entry name" value="Peptidase_M17_N"/>
    <property type="match status" value="1"/>
</dbReference>
<dbReference type="PRINTS" id="PR00481">
    <property type="entry name" value="LAMNOPPTDASE"/>
</dbReference>
<dbReference type="SUPFAM" id="SSF52949">
    <property type="entry name" value="Macro domain-like"/>
    <property type="match status" value="1"/>
</dbReference>
<dbReference type="SUPFAM" id="SSF53187">
    <property type="entry name" value="Zn-dependent exopeptidases"/>
    <property type="match status" value="1"/>
</dbReference>
<dbReference type="PROSITE" id="PS00631">
    <property type="entry name" value="CYTOSOL_AP"/>
    <property type="match status" value="1"/>
</dbReference>
<accession>P9WHT3</accession>
<accession>L0T959</accession>
<accession>Q10401</accession>
<reference key="1">
    <citation type="journal article" date="1998" name="Nature">
        <title>Deciphering the biology of Mycobacterium tuberculosis from the complete genome sequence.</title>
        <authorList>
            <person name="Cole S.T."/>
            <person name="Brosch R."/>
            <person name="Parkhill J."/>
            <person name="Garnier T."/>
            <person name="Churcher C.M."/>
            <person name="Harris D.E."/>
            <person name="Gordon S.V."/>
            <person name="Eiglmeier K."/>
            <person name="Gas S."/>
            <person name="Barry C.E. III"/>
            <person name="Tekaia F."/>
            <person name="Badcock K."/>
            <person name="Basham D."/>
            <person name="Brown D."/>
            <person name="Chillingworth T."/>
            <person name="Connor R."/>
            <person name="Davies R.M."/>
            <person name="Devlin K."/>
            <person name="Feltwell T."/>
            <person name="Gentles S."/>
            <person name="Hamlin N."/>
            <person name="Holroyd S."/>
            <person name="Hornsby T."/>
            <person name="Jagels K."/>
            <person name="Krogh A."/>
            <person name="McLean J."/>
            <person name="Moule S."/>
            <person name="Murphy L.D."/>
            <person name="Oliver S."/>
            <person name="Osborne J."/>
            <person name="Quail M.A."/>
            <person name="Rajandream M.A."/>
            <person name="Rogers J."/>
            <person name="Rutter S."/>
            <person name="Seeger K."/>
            <person name="Skelton S."/>
            <person name="Squares S."/>
            <person name="Squares R."/>
            <person name="Sulston J.E."/>
            <person name="Taylor K."/>
            <person name="Whitehead S."/>
            <person name="Barrell B.G."/>
        </authorList>
    </citation>
    <scope>NUCLEOTIDE SEQUENCE [LARGE SCALE GENOMIC DNA]</scope>
    <source>
        <strain>ATCC 25618 / H37Rv</strain>
    </source>
</reference>
<reference key="2">
    <citation type="journal article" date="2011" name="Mol. Cell. Proteomics">
        <title>Proteogenomic analysis of Mycobacterium tuberculosis by high resolution mass spectrometry.</title>
        <authorList>
            <person name="Kelkar D.S."/>
            <person name="Kumar D."/>
            <person name="Kumar P."/>
            <person name="Balakrishnan L."/>
            <person name="Muthusamy B."/>
            <person name="Yadav A.K."/>
            <person name="Shrivastava P."/>
            <person name="Marimuthu A."/>
            <person name="Anand S."/>
            <person name="Sundaram H."/>
            <person name="Kingsbury R."/>
            <person name="Harsha H.C."/>
            <person name="Nair B."/>
            <person name="Prasad T.S."/>
            <person name="Chauhan D.S."/>
            <person name="Katoch K."/>
            <person name="Katoch V.M."/>
            <person name="Kumar P."/>
            <person name="Chaerkady R."/>
            <person name="Ramachandran S."/>
            <person name="Dash D."/>
            <person name="Pandey A."/>
        </authorList>
    </citation>
    <scope>IDENTIFICATION BY MASS SPECTROMETRY [LARGE SCALE ANALYSIS]</scope>
    <source>
        <strain>ATCC 25618 / H37Rv</strain>
    </source>
</reference>
<proteinExistence type="evidence at protein level"/>
<sequence>MTTEPGYLSPSVAVATSMPKRGVGAAVLIVPVVSTGEEDRPGAVVASAEPFLRADTVAEIEAGLRALDATGASDQVHRLAVPSLPVGSVLTVGLGKPRREWPADTIRCAAGVAARALNSSEAVITTLAELPGDGICSATVEGLILGSYRFSAFRSDKTAPKDAGLRKITVLCCAKDAKKRALHGAAVATAVATARDLVNTPPSHLFPAEFAKRAKTLSESVGLDVEVIDEKALKKAGYGGVIGVGQGSSRPPRLVRLIHRGSRLAKNPQKAKKVALVGKGITFDTGGISIKPAASMHHMTSDMGGAAAVIATVTLAARLRLPIDVIATVPMAENMPSATAQRPGDVLTQYGGTTVEVLNTDAEGRLILADAIVRACEDKPDYLIETSTLTGAQTVALGTRIPGVMGSDEFRDRVAAISQRVGENGWPMPLPDDLKDDLKSTVADLANVSGQRFAGMLVAGVFLREFVAESVDWAHIDVAGPAYNTGSAWGYTPKGATGVPTRTMFAVLEDIAKNG</sequence>
<gene>
    <name type="primary">pepA</name>
    <name type="synonym">pepB</name>
    <name type="ordered locus">Rv2213</name>
    <name type="ORF">MTCY190.24</name>
</gene>
<keyword id="KW-0031">Aminopeptidase</keyword>
<keyword id="KW-0963">Cytoplasm</keyword>
<keyword id="KW-0378">Hydrolase</keyword>
<keyword id="KW-0464">Manganese</keyword>
<keyword id="KW-0479">Metal-binding</keyword>
<keyword id="KW-0645">Protease</keyword>
<keyword id="KW-1185">Reference proteome</keyword>